<gene>
    <name evidence="1" type="primary">codY</name>
    <name type="ordered locus">CLM_2729</name>
</gene>
<sequence length="258" mass="29042">MSSLLDKTRMLNRILQKSGTEPVDFEDICDLLSDVLACNVYIISRKGKILGSKFYSGFECDEVREVVLKENRFPDFYNNKLLNVNETLSNSPNHDKCVFDNLKDCSINNKLSTIVPINGNRERLGTLLLARFDKEFTDEDLVLAEYSATIIGLEILRSKQDQIEEEARKKAVVQLAIGTLSYSELEAVEHIFNELDGTEGLLVASKIADKVGITRSVIVNALRKFESAGVIESRSLGMKGTHIRILNDKLLEELKKIK</sequence>
<organism>
    <name type="scientific">Clostridium botulinum (strain Kyoto / Type A2)</name>
    <dbReference type="NCBI Taxonomy" id="536232"/>
    <lineage>
        <taxon>Bacteria</taxon>
        <taxon>Bacillati</taxon>
        <taxon>Bacillota</taxon>
        <taxon>Clostridia</taxon>
        <taxon>Eubacteriales</taxon>
        <taxon>Clostridiaceae</taxon>
        <taxon>Clostridium</taxon>
    </lineage>
</organism>
<accession>C1FSK6</accession>
<keyword id="KW-0963">Cytoplasm</keyword>
<keyword id="KW-0238">DNA-binding</keyword>
<keyword id="KW-0678">Repressor</keyword>
<keyword id="KW-0804">Transcription</keyword>
<keyword id="KW-0805">Transcription regulation</keyword>
<comment type="function">
    <text evidence="1">DNA-binding global transcriptional regulator which is involved in the adaptive response to starvation and acts by directly or indirectly controlling the expression of numerous genes in response to nutrient availability. During rapid exponential growth, CodY is highly active and represses genes whose products allow adaptation to nutrient depletion.</text>
</comment>
<comment type="subcellular location">
    <subcellularLocation>
        <location evidence="1">Cytoplasm</location>
    </subcellularLocation>
</comment>
<comment type="similarity">
    <text evidence="1">Belongs to the CodY family.</text>
</comment>
<name>CODY_CLOBJ</name>
<reference key="1">
    <citation type="submission" date="2008-10" db="EMBL/GenBank/DDBJ databases">
        <title>Genome sequence of Clostridium botulinum A2 Kyoto.</title>
        <authorList>
            <person name="Shrivastava S."/>
            <person name="Brinkac L.M."/>
            <person name="Brown J.L."/>
            <person name="Bruce D."/>
            <person name="Detter C.C."/>
            <person name="Johnson E.A."/>
            <person name="Munk C.A."/>
            <person name="Smith L.A."/>
            <person name="Smith T.J."/>
            <person name="Sutton G."/>
            <person name="Brettin T.S."/>
        </authorList>
    </citation>
    <scope>NUCLEOTIDE SEQUENCE [LARGE SCALE GENOMIC DNA]</scope>
    <source>
        <strain>Kyoto / Type A2</strain>
    </source>
</reference>
<evidence type="ECO:0000255" key="1">
    <source>
        <dbReference type="HAMAP-Rule" id="MF_00621"/>
    </source>
</evidence>
<proteinExistence type="inferred from homology"/>
<protein>
    <recommendedName>
        <fullName evidence="1">Global transcriptional regulator CodY</fullName>
    </recommendedName>
</protein>
<dbReference type="EMBL" id="CP001581">
    <property type="protein sequence ID" value="ACO84236.1"/>
    <property type="molecule type" value="Genomic_DNA"/>
</dbReference>
<dbReference type="RefSeq" id="WP_003362579.1">
    <property type="nucleotide sequence ID" value="NC_012563.1"/>
</dbReference>
<dbReference type="SMR" id="C1FSK6"/>
<dbReference type="GeneID" id="92939187"/>
<dbReference type="KEGG" id="cby:CLM_2729"/>
<dbReference type="eggNOG" id="COG4465">
    <property type="taxonomic scope" value="Bacteria"/>
</dbReference>
<dbReference type="HOGENOM" id="CLU_089581_0_0_9"/>
<dbReference type="Proteomes" id="UP000001374">
    <property type="component" value="Chromosome"/>
</dbReference>
<dbReference type="GO" id="GO:0005737">
    <property type="term" value="C:cytoplasm"/>
    <property type="evidence" value="ECO:0007669"/>
    <property type="project" value="UniProtKB-SubCell"/>
</dbReference>
<dbReference type="GO" id="GO:0003677">
    <property type="term" value="F:DNA binding"/>
    <property type="evidence" value="ECO:0007669"/>
    <property type="project" value="UniProtKB-UniRule"/>
</dbReference>
<dbReference type="GO" id="GO:0003700">
    <property type="term" value="F:DNA-binding transcription factor activity"/>
    <property type="evidence" value="ECO:0007669"/>
    <property type="project" value="InterPro"/>
</dbReference>
<dbReference type="GO" id="GO:0005525">
    <property type="term" value="F:GTP binding"/>
    <property type="evidence" value="ECO:0007669"/>
    <property type="project" value="InterPro"/>
</dbReference>
<dbReference type="GO" id="GO:0045892">
    <property type="term" value="P:negative regulation of DNA-templated transcription"/>
    <property type="evidence" value="ECO:0007669"/>
    <property type="project" value="UniProtKB-UniRule"/>
</dbReference>
<dbReference type="FunFam" id="1.10.10.10:FF:000034">
    <property type="entry name" value="GTP-sensing transcriptional pleiotropic repressor CodY"/>
    <property type="match status" value="1"/>
</dbReference>
<dbReference type="FunFam" id="3.30.450.40:FF:000003">
    <property type="entry name" value="GTP-sensing transcriptional pleiotropic repressor CodY"/>
    <property type="match status" value="1"/>
</dbReference>
<dbReference type="Gene3D" id="3.30.450.40">
    <property type="match status" value="1"/>
</dbReference>
<dbReference type="Gene3D" id="1.10.10.10">
    <property type="entry name" value="Winged helix-like DNA-binding domain superfamily/Winged helix DNA-binding domain"/>
    <property type="match status" value="1"/>
</dbReference>
<dbReference type="HAMAP" id="MF_00621">
    <property type="entry name" value="HTH_type_CodY"/>
    <property type="match status" value="1"/>
</dbReference>
<dbReference type="InterPro" id="IPR014154">
    <property type="entry name" value="CodY"/>
</dbReference>
<dbReference type="InterPro" id="IPR029016">
    <property type="entry name" value="GAF-like_dom_sf"/>
</dbReference>
<dbReference type="InterPro" id="IPR013198">
    <property type="entry name" value="GTP_trans_reg_CodY_C"/>
</dbReference>
<dbReference type="InterPro" id="IPR010312">
    <property type="entry name" value="Transc_reg_CodY_N"/>
</dbReference>
<dbReference type="InterPro" id="IPR036388">
    <property type="entry name" value="WH-like_DNA-bd_sf"/>
</dbReference>
<dbReference type="InterPro" id="IPR036390">
    <property type="entry name" value="WH_DNA-bd_sf"/>
</dbReference>
<dbReference type="NCBIfam" id="TIGR02787">
    <property type="entry name" value="codY_Gpos"/>
    <property type="match status" value="1"/>
</dbReference>
<dbReference type="NCBIfam" id="NF003170">
    <property type="entry name" value="PRK04158.1"/>
    <property type="match status" value="1"/>
</dbReference>
<dbReference type="PANTHER" id="PTHR40062:SF1">
    <property type="entry name" value="GLOBAL TRANSCRIPTIONAL REGULATOR CODY"/>
    <property type="match status" value="1"/>
</dbReference>
<dbReference type="PANTHER" id="PTHR40062">
    <property type="entry name" value="GTP-SENSING TRANSCRIPTIONAL PLEIOTROPIC REPRESSOR CODY"/>
    <property type="match status" value="1"/>
</dbReference>
<dbReference type="Pfam" id="PF06018">
    <property type="entry name" value="CodY"/>
    <property type="match status" value="1"/>
</dbReference>
<dbReference type="Pfam" id="PF08222">
    <property type="entry name" value="HTH_CodY"/>
    <property type="match status" value="1"/>
</dbReference>
<dbReference type="PIRSF" id="PIRSF011572">
    <property type="entry name" value="GTP_sensing_CodY"/>
    <property type="match status" value="1"/>
</dbReference>
<dbReference type="SUPFAM" id="SSF55781">
    <property type="entry name" value="GAF domain-like"/>
    <property type="match status" value="1"/>
</dbReference>
<dbReference type="SUPFAM" id="SSF46785">
    <property type="entry name" value="Winged helix' DNA-binding domain"/>
    <property type="match status" value="1"/>
</dbReference>
<feature type="chain" id="PRO_1000147203" description="Global transcriptional regulator CodY">
    <location>
        <begin position="1"/>
        <end position="258"/>
    </location>
</feature>
<feature type="DNA-binding region" description="H-T-H motif" evidence="1">
    <location>
        <begin position="204"/>
        <end position="223"/>
    </location>
</feature>
<feature type="region of interest" description="GAF domain" evidence="1">
    <location>
        <begin position="1"/>
        <end position="156"/>
    </location>
</feature>